<organism>
    <name type="scientific">Rhodopseudomonas palustris (strain BisB5)</name>
    <dbReference type="NCBI Taxonomy" id="316057"/>
    <lineage>
        <taxon>Bacteria</taxon>
        <taxon>Pseudomonadati</taxon>
        <taxon>Pseudomonadota</taxon>
        <taxon>Alphaproteobacteria</taxon>
        <taxon>Hyphomicrobiales</taxon>
        <taxon>Nitrobacteraceae</taxon>
        <taxon>Rhodopseudomonas</taxon>
    </lineage>
</organism>
<protein>
    <recommendedName>
        <fullName evidence="1">Ribosomal protein L11 methyltransferase</fullName>
        <shortName evidence="1">L11 Mtase</shortName>
        <ecNumber evidence="1">2.1.1.-</ecNumber>
    </recommendedName>
</protein>
<reference key="1">
    <citation type="submission" date="2006-03" db="EMBL/GenBank/DDBJ databases">
        <title>Complete sequence of Rhodopseudomonas palustris BisB5.</title>
        <authorList>
            <consortium name="US DOE Joint Genome Institute"/>
            <person name="Copeland A."/>
            <person name="Lucas S."/>
            <person name="Lapidus A."/>
            <person name="Barry K."/>
            <person name="Detter J.C."/>
            <person name="Glavina del Rio T."/>
            <person name="Hammon N."/>
            <person name="Israni S."/>
            <person name="Dalin E."/>
            <person name="Tice H."/>
            <person name="Pitluck S."/>
            <person name="Chain P."/>
            <person name="Malfatti S."/>
            <person name="Shin M."/>
            <person name="Vergez L."/>
            <person name="Schmutz J."/>
            <person name="Larimer F."/>
            <person name="Land M."/>
            <person name="Hauser L."/>
            <person name="Pelletier D.A."/>
            <person name="Kyrpides N."/>
            <person name="Lykidis A."/>
            <person name="Oda Y."/>
            <person name="Harwood C.S."/>
            <person name="Richardson P."/>
        </authorList>
    </citation>
    <scope>NUCLEOTIDE SEQUENCE [LARGE SCALE GENOMIC DNA]</scope>
    <source>
        <strain>BisB5</strain>
    </source>
</reference>
<accession>Q133Y8</accession>
<dbReference type="EC" id="2.1.1.-" evidence="1"/>
<dbReference type="EMBL" id="CP000283">
    <property type="protein sequence ID" value="ABE40601.1"/>
    <property type="molecule type" value="Genomic_DNA"/>
</dbReference>
<dbReference type="SMR" id="Q133Y8"/>
<dbReference type="STRING" id="316057.RPD_3377"/>
<dbReference type="KEGG" id="rpd:RPD_3377"/>
<dbReference type="eggNOG" id="COG2264">
    <property type="taxonomic scope" value="Bacteria"/>
</dbReference>
<dbReference type="HOGENOM" id="CLU_049382_3_0_5"/>
<dbReference type="BioCyc" id="RPAL316057:RPD_RS16980-MONOMER"/>
<dbReference type="Proteomes" id="UP000001818">
    <property type="component" value="Chromosome"/>
</dbReference>
<dbReference type="GO" id="GO:0005737">
    <property type="term" value="C:cytoplasm"/>
    <property type="evidence" value="ECO:0007669"/>
    <property type="project" value="UniProtKB-SubCell"/>
</dbReference>
<dbReference type="GO" id="GO:0016279">
    <property type="term" value="F:protein-lysine N-methyltransferase activity"/>
    <property type="evidence" value="ECO:0007669"/>
    <property type="project" value="RHEA"/>
</dbReference>
<dbReference type="GO" id="GO:0032259">
    <property type="term" value="P:methylation"/>
    <property type="evidence" value="ECO:0007669"/>
    <property type="project" value="UniProtKB-KW"/>
</dbReference>
<dbReference type="CDD" id="cd02440">
    <property type="entry name" value="AdoMet_MTases"/>
    <property type="match status" value="1"/>
</dbReference>
<dbReference type="Gene3D" id="3.40.50.150">
    <property type="entry name" value="Vaccinia Virus protein VP39"/>
    <property type="match status" value="1"/>
</dbReference>
<dbReference type="HAMAP" id="MF_00735">
    <property type="entry name" value="Methyltr_PrmA"/>
    <property type="match status" value="1"/>
</dbReference>
<dbReference type="InterPro" id="IPR050078">
    <property type="entry name" value="Ribosomal_L11_MeTrfase_PrmA"/>
</dbReference>
<dbReference type="InterPro" id="IPR004498">
    <property type="entry name" value="Ribosomal_PrmA_MeTrfase"/>
</dbReference>
<dbReference type="InterPro" id="IPR029063">
    <property type="entry name" value="SAM-dependent_MTases_sf"/>
</dbReference>
<dbReference type="NCBIfam" id="NF001784">
    <property type="entry name" value="PRK00517.2-1"/>
    <property type="match status" value="1"/>
</dbReference>
<dbReference type="PANTHER" id="PTHR43648">
    <property type="entry name" value="ELECTRON TRANSFER FLAVOPROTEIN BETA SUBUNIT LYSINE METHYLTRANSFERASE"/>
    <property type="match status" value="1"/>
</dbReference>
<dbReference type="PANTHER" id="PTHR43648:SF1">
    <property type="entry name" value="ELECTRON TRANSFER FLAVOPROTEIN BETA SUBUNIT LYSINE METHYLTRANSFERASE"/>
    <property type="match status" value="1"/>
</dbReference>
<dbReference type="Pfam" id="PF06325">
    <property type="entry name" value="PrmA"/>
    <property type="match status" value="1"/>
</dbReference>
<dbReference type="PIRSF" id="PIRSF000401">
    <property type="entry name" value="RPL11_MTase"/>
    <property type="match status" value="1"/>
</dbReference>
<dbReference type="SUPFAM" id="SSF53335">
    <property type="entry name" value="S-adenosyl-L-methionine-dependent methyltransferases"/>
    <property type="match status" value="1"/>
</dbReference>
<evidence type="ECO:0000255" key="1">
    <source>
        <dbReference type="HAMAP-Rule" id="MF_00735"/>
    </source>
</evidence>
<proteinExistence type="inferred from homology"/>
<feature type="chain" id="PRO_1000148137" description="Ribosomal protein L11 methyltransferase">
    <location>
        <begin position="1"/>
        <end position="295"/>
    </location>
</feature>
<feature type="binding site" evidence="1">
    <location>
        <position position="138"/>
    </location>
    <ligand>
        <name>S-adenosyl-L-methionine</name>
        <dbReference type="ChEBI" id="CHEBI:59789"/>
    </ligand>
</feature>
<feature type="binding site" evidence="1">
    <location>
        <position position="161"/>
    </location>
    <ligand>
        <name>S-adenosyl-L-methionine</name>
        <dbReference type="ChEBI" id="CHEBI:59789"/>
    </ligand>
</feature>
<feature type="binding site" evidence="1">
    <location>
        <position position="183"/>
    </location>
    <ligand>
        <name>S-adenosyl-L-methionine</name>
        <dbReference type="ChEBI" id="CHEBI:59789"/>
    </ligand>
</feature>
<feature type="binding site" evidence="1">
    <location>
        <position position="230"/>
    </location>
    <ligand>
        <name>S-adenosyl-L-methionine</name>
        <dbReference type="ChEBI" id="CHEBI:59789"/>
    </ligand>
</feature>
<name>PRMA_RHOPS</name>
<sequence>MTETASTRASFVIGDEAAARRVTDLLGESFDDGELAIAAFERPDRSWEVSLHFGEMPNLDGVRALVAQAAGDAAAAAMTVESIAAKDWVAASLEGLVPVPAGRFVVHGSHDRARIPSNKLGIEIEAALAFGTGHHGTTRGCLTLLDLVLRAGPPRSVLDLGTGTGVLAIAAAKALRQPVLATDIDRQSVAVAKENARLNGVGNLVEAVHATGFSAPVFAAWGPFDLVLANILANPLRQLSTPMSQHLAPSALVILSGLLQPQAQSVIAAYRARGCVLLRQIVIEGWSSLLLAKTF</sequence>
<gene>
    <name evidence="1" type="primary">prmA</name>
    <name type="ordered locus">RPD_3377</name>
</gene>
<keyword id="KW-0963">Cytoplasm</keyword>
<keyword id="KW-0489">Methyltransferase</keyword>
<keyword id="KW-0949">S-adenosyl-L-methionine</keyword>
<keyword id="KW-0808">Transferase</keyword>
<comment type="function">
    <text evidence="1">Methylates ribosomal protein L11.</text>
</comment>
<comment type="catalytic activity">
    <reaction evidence="1">
        <text>L-lysyl-[protein] + 3 S-adenosyl-L-methionine = N(6),N(6),N(6)-trimethyl-L-lysyl-[protein] + 3 S-adenosyl-L-homocysteine + 3 H(+)</text>
        <dbReference type="Rhea" id="RHEA:54192"/>
        <dbReference type="Rhea" id="RHEA-COMP:9752"/>
        <dbReference type="Rhea" id="RHEA-COMP:13826"/>
        <dbReference type="ChEBI" id="CHEBI:15378"/>
        <dbReference type="ChEBI" id="CHEBI:29969"/>
        <dbReference type="ChEBI" id="CHEBI:57856"/>
        <dbReference type="ChEBI" id="CHEBI:59789"/>
        <dbReference type="ChEBI" id="CHEBI:61961"/>
    </reaction>
</comment>
<comment type="subcellular location">
    <subcellularLocation>
        <location evidence="1">Cytoplasm</location>
    </subcellularLocation>
</comment>
<comment type="similarity">
    <text evidence="1">Belongs to the methyltransferase superfamily. PrmA family.</text>
</comment>